<organism>
    <name type="scientific">Escherichia coli O9:H4 (strain HS)</name>
    <dbReference type="NCBI Taxonomy" id="331112"/>
    <lineage>
        <taxon>Bacteria</taxon>
        <taxon>Pseudomonadati</taxon>
        <taxon>Pseudomonadota</taxon>
        <taxon>Gammaproteobacteria</taxon>
        <taxon>Enterobacterales</taxon>
        <taxon>Enterobacteriaceae</taxon>
        <taxon>Escherichia</taxon>
    </lineage>
</organism>
<comment type="similarity">
    <text evidence="1">Belongs to the DsrB family.</text>
</comment>
<sequence length="62" mass="6946">MKVNDRVTVKTDGGPRRPGVVLAVEEFSEGTMYLVSLEDYPLGIWFFNEAGHQDGIFVEKAE</sequence>
<reference key="1">
    <citation type="journal article" date="2008" name="J. Bacteriol.">
        <title>The pangenome structure of Escherichia coli: comparative genomic analysis of E. coli commensal and pathogenic isolates.</title>
        <authorList>
            <person name="Rasko D.A."/>
            <person name="Rosovitz M.J."/>
            <person name="Myers G.S.A."/>
            <person name="Mongodin E.F."/>
            <person name="Fricke W.F."/>
            <person name="Gajer P."/>
            <person name="Crabtree J."/>
            <person name="Sebaihia M."/>
            <person name="Thomson N.R."/>
            <person name="Chaudhuri R."/>
            <person name="Henderson I.R."/>
            <person name="Sperandio V."/>
            <person name="Ravel J."/>
        </authorList>
    </citation>
    <scope>NUCLEOTIDE SEQUENCE [LARGE SCALE GENOMIC DNA]</scope>
    <source>
        <strain>HS</strain>
    </source>
</reference>
<gene>
    <name evidence="1" type="primary">dsrB</name>
    <name type="ordered locus">EcHS_A2052</name>
</gene>
<proteinExistence type="inferred from homology"/>
<evidence type="ECO:0000255" key="1">
    <source>
        <dbReference type="HAMAP-Rule" id="MF_01549"/>
    </source>
</evidence>
<name>DSRB_ECOHS</name>
<protein>
    <recommendedName>
        <fullName evidence="1">Protein DsrB</fullName>
    </recommendedName>
</protein>
<dbReference type="EMBL" id="CP000802">
    <property type="protein sequence ID" value="ABV06358.1"/>
    <property type="molecule type" value="Genomic_DNA"/>
</dbReference>
<dbReference type="RefSeq" id="WP_000867217.1">
    <property type="nucleotide sequence ID" value="NC_009800.1"/>
</dbReference>
<dbReference type="SMR" id="A8A1F4"/>
<dbReference type="GeneID" id="93775233"/>
<dbReference type="KEGG" id="ecx:EcHS_A2052"/>
<dbReference type="HOGENOM" id="CLU_189289_0_0_6"/>
<dbReference type="HAMAP" id="MF_01549">
    <property type="entry name" value="DsrB"/>
    <property type="match status" value="1"/>
</dbReference>
<dbReference type="InterPro" id="IPR019717">
    <property type="entry name" value="Dextransucrase_DSRB"/>
</dbReference>
<dbReference type="NCBIfam" id="NF007981">
    <property type="entry name" value="PRK10708.1"/>
    <property type="match status" value="1"/>
</dbReference>
<dbReference type="Pfam" id="PF10781">
    <property type="entry name" value="DSRB"/>
    <property type="match status" value="1"/>
</dbReference>
<feature type="chain" id="PRO_1000068817" description="Protein DsrB">
    <location>
        <begin position="1"/>
        <end position="62"/>
    </location>
</feature>
<accession>A8A1F4</accession>